<protein>
    <recommendedName>
        <fullName evidence="1">Small ribosomal subunit protein uS11c</fullName>
    </recommendedName>
    <alternativeName>
        <fullName evidence="2">30S ribosomal protein S11, chloroplastic</fullName>
    </alternativeName>
</protein>
<name>RR11_CHLVU</name>
<reference key="1">
    <citation type="journal article" date="1997" name="Proc. Natl. Acad. Sci. U.S.A.">
        <title>Complete nucleotide sequence of the chloroplast genome from the green alga Chlorella vulgaris: the existence of genes possibly involved in chloroplast division.</title>
        <authorList>
            <person name="Wakasugi T."/>
            <person name="Nagai T."/>
            <person name="Kapoor M."/>
            <person name="Sugita M."/>
            <person name="Ito M."/>
            <person name="Ito S."/>
            <person name="Tsudzuki J."/>
            <person name="Nakashima K."/>
            <person name="Tsudzuki T."/>
            <person name="Suzuki Y."/>
            <person name="Hamada A."/>
            <person name="Ohta T."/>
            <person name="Inamura A."/>
            <person name="Yoshinaga K."/>
            <person name="Sugiura M."/>
        </authorList>
    </citation>
    <scope>NUCLEOTIDE SEQUENCE [LARGE SCALE GENOMIC DNA]</scope>
    <source>
        <strain>IAM C-27 / Tamiya</strain>
    </source>
</reference>
<accession>P56359</accession>
<sequence length="130" mass="13959">MAKKIEKSAKKKFREKVLLGVAHIQSTFNNTIVTITTNKGNVLAWSSAGACGFKGARKKTPLAAKQAAENAAQTCVSQGMREIRVNVKGAGAGREAALRGLRDAGLNITIIRDITPIPHNGCRPPKKRRI</sequence>
<evidence type="ECO:0000255" key="1">
    <source>
        <dbReference type="HAMAP-Rule" id="MF_01310"/>
    </source>
</evidence>
<evidence type="ECO:0000305" key="2"/>
<proteinExistence type="inferred from homology"/>
<geneLocation type="chloroplast"/>
<keyword id="KW-0150">Chloroplast</keyword>
<keyword id="KW-0934">Plastid</keyword>
<keyword id="KW-0687">Ribonucleoprotein</keyword>
<keyword id="KW-0689">Ribosomal protein</keyword>
<keyword id="KW-0694">RNA-binding</keyword>
<keyword id="KW-0699">rRNA-binding</keyword>
<dbReference type="EMBL" id="AB001684">
    <property type="protein sequence ID" value="BAA57998.1"/>
    <property type="molecule type" value="Genomic_DNA"/>
</dbReference>
<dbReference type="PIR" id="T07350">
    <property type="entry name" value="T07350"/>
</dbReference>
<dbReference type="RefSeq" id="NP_045922.1">
    <property type="nucleotide sequence ID" value="NC_001865.1"/>
</dbReference>
<dbReference type="SMR" id="P56359"/>
<dbReference type="GeneID" id="809128"/>
<dbReference type="GO" id="GO:0009507">
    <property type="term" value="C:chloroplast"/>
    <property type="evidence" value="ECO:0007669"/>
    <property type="project" value="UniProtKB-SubCell"/>
</dbReference>
<dbReference type="GO" id="GO:1990904">
    <property type="term" value="C:ribonucleoprotein complex"/>
    <property type="evidence" value="ECO:0007669"/>
    <property type="project" value="UniProtKB-KW"/>
</dbReference>
<dbReference type="GO" id="GO:0005840">
    <property type="term" value="C:ribosome"/>
    <property type="evidence" value="ECO:0007669"/>
    <property type="project" value="UniProtKB-KW"/>
</dbReference>
<dbReference type="GO" id="GO:0019843">
    <property type="term" value="F:rRNA binding"/>
    <property type="evidence" value="ECO:0007669"/>
    <property type="project" value="UniProtKB-UniRule"/>
</dbReference>
<dbReference type="GO" id="GO:0003735">
    <property type="term" value="F:structural constituent of ribosome"/>
    <property type="evidence" value="ECO:0007669"/>
    <property type="project" value="InterPro"/>
</dbReference>
<dbReference type="GO" id="GO:0006412">
    <property type="term" value="P:translation"/>
    <property type="evidence" value="ECO:0007669"/>
    <property type="project" value="UniProtKB-UniRule"/>
</dbReference>
<dbReference type="FunFam" id="3.30.420.80:FF:000010">
    <property type="entry name" value="30S ribosomal protein S11"/>
    <property type="match status" value="1"/>
</dbReference>
<dbReference type="Gene3D" id="3.30.420.80">
    <property type="entry name" value="Ribosomal protein S11"/>
    <property type="match status" value="1"/>
</dbReference>
<dbReference type="HAMAP" id="MF_01310">
    <property type="entry name" value="Ribosomal_uS11"/>
    <property type="match status" value="1"/>
</dbReference>
<dbReference type="InterPro" id="IPR001971">
    <property type="entry name" value="Ribosomal_uS11"/>
</dbReference>
<dbReference type="InterPro" id="IPR019981">
    <property type="entry name" value="Ribosomal_uS11_bac-type"/>
</dbReference>
<dbReference type="InterPro" id="IPR018102">
    <property type="entry name" value="Ribosomal_uS11_CS"/>
</dbReference>
<dbReference type="InterPro" id="IPR036967">
    <property type="entry name" value="Ribosomal_uS11_sf"/>
</dbReference>
<dbReference type="NCBIfam" id="NF003698">
    <property type="entry name" value="PRK05309.1"/>
    <property type="match status" value="1"/>
</dbReference>
<dbReference type="NCBIfam" id="TIGR03632">
    <property type="entry name" value="uS11_bact"/>
    <property type="match status" value="1"/>
</dbReference>
<dbReference type="PANTHER" id="PTHR11759">
    <property type="entry name" value="40S RIBOSOMAL PROTEIN S14/30S RIBOSOMAL PROTEIN S11"/>
    <property type="match status" value="1"/>
</dbReference>
<dbReference type="Pfam" id="PF00411">
    <property type="entry name" value="Ribosomal_S11"/>
    <property type="match status" value="1"/>
</dbReference>
<dbReference type="PIRSF" id="PIRSF002131">
    <property type="entry name" value="Ribosomal_S11"/>
    <property type="match status" value="1"/>
</dbReference>
<dbReference type="SUPFAM" id="SSF53137">
    <property type="entry name" value="Translational machinery components"/>
    <property type="match status" value="1"/>
</dbReference>
<dbReference type="PROSITE" id="PS00054">
    <property type="entry name" value="RIBOSOMAL_S11"/>
    <property type="match status" value="1"/>
</dbReference>
<organism>
    <name type="scientific">Chlorella vulgaris</name>
    <name type="common">Green alga</name>
    <dbReference type="NCBI Taxonomy" id="3077"/>
    <lineage>
        <taxon>Eukaryota</taxon>
        <taxon>Viridiplantae</taxon>
        <taxon>Chlorophyta</taxon>
        <taxon>core chlorophytes</taxon>
        <taxon>Trebouxiophyceae</taxon>
        <taxon>Chlorellales</taxon>
        <taxon>Chlorellaceae</taxon>
        <taxon>Chlorella clade</taxon>
        <taxon>Chlorella</taxon>
    </lineage>
</organism>
<comment type="subunit">
    <text evidence="1">Part of the 30S ribosomal subunit.</text>
</comment>
<comment type="subcellular location">
    <subcellularLocation>
        <location>Plastid</location>
        <location>Chloroplast</location>
    </subcellularLocation>
</comment>
<comment type="similarity">
    <text evidence="1">Belongs to the universal ribosomal protein uS11 family.</text>
</comment>
<gene>
    <name evidence="1" type="primary">rps11</name>
</gene>
<feature type="chain" id="PRO_0000123296" description="Small ribosomal subunit protein uS11c">
    <location>
        <begin position="1"/>
        <end position="130"/>
    </location>
</feature>